<reference key="1">
    <citation type="journal article" date="2004" name="Nature">
        <title>Genome sequence of the Brown Norway rat yields insights into mammalian evolution.</title>
        <authorList>
            <person name="Gibbs R.A."/>
            <person name="Weinstock G.M."/>
            <person name="Metzker M.L."/>
            <person name="Muzny D.M."/>
            <person name="Sodergren E.J."/>
            <person name="Scherer S."/>
            <person name="Scott G."/>
            <person name="Steffen D."/>
            <person name="Worley K.C."/>
            <person name="Burch P.E."/>
            <person name="Okwuonu G."/>
            <person name="Hines S."/>
            <person name="Lewis L."/>
            <person name="Deramo C."/>
            <person name="Delgado O."/>
            <person name="Dugan-Rocha S."/>
            <person name="Miner G."/>
            <person name="Morgan M."/>
            <person name="Hawes A."/>
            <person name="Gill R."/>
            <person name="Holt R.A."/>
            <person name="Adams M.D."/>
            <person name="Amanatides P.G."/>
            <person name="Baden-Tillson H."/>
            <person name="Barnstead M."/>
            <person name="Chin S."/>
            <person name="Evans C.A."/>
            <person name="Ferriera S."/>
            <person name="Fosler C."/>
            <person name="Glodek A."/>
            <person name="Gu Z."/>
            <person name="Jennings D."/>
            <person name="Kraft C.L."/>
            <person name="Nguyen T."/>
            <person name="Pfannkoch C.M."/>
            <person name="Sitter C."/>
            <person name="Sutton G.G."/>
            <person name="Venter J.C."/>
            <person name="Woodage T."/>
            <person name="Smith D."/>
            <person name="Lee H.-M."/>
            <person name="Gustafson E."/>
            <person name="Cahill P."/>
            <person name="Kana A."/>
            <person name="Doucette-Stamm L."/>
            <person name="Weinstock K."/>
            <person name="Fechtel K."/>
            <person name="Weiss R.B."/>
            <person name="Dunn D.M."/>
            <person name="Green E.D."/>
            <person name="Blakesley R.W."/>
            <person name="Bouffard G.G."/>
            <person name="De Jong P.J."/>
            <person name="Osoegawa K."/>
            <person name="Zhu B."/>
            <person name="Marra M."/>
            <person name="Schein J."/>
            <person name="Bosdet I."/>
            <person name="Fjell C."/>
            <person name="Jones S."/>
            <person name="Krzywinski M."/>
            <person name="Mathewson C."/>
            <person name="Siddiqui A."/>
            <person name="Wye N."/>
            <person name="McPherson J."/>
            <person name="Zhao S."/>
            <person name="Fraser C.M."/>
            <person name="Shetty J."/>
            <person name="Shatsman S."/>
            <person name="Geer K."/>
            <person name="Chen Y."/>
            <person name="Abramzon S."/>
            <person name="Nierman W.C."/>
            <person name="Havlak P.H."/>
            <person name="Chen R."/>
            <person name="Durbin K.J."/>
            <person name="Egan A."/>
            <person name="Ren Y."/>
            <person name="Song X.-Z."/>
            <person name="Li B."/>
            <person name="Liu Y."/>
            <person name="Qin X."/>
            <person name="Cawley S."/>
            <person name="Cooney A.J."/>
            <person name="D'Souza L.M."/>
            <person name="Martin K."/>
            <person name="Wu J.Q."/>
            <person name="Gonzalez-Garay M.L."/>
            <person name="Jackson A.R."/>
            <person name="Kalafus K.J."/>
            <person name="McLeod M.P."/>
            <person name="Milosavljevic A."/>
            <person name="Virk D."/>
            <person name="Volkov A."/>
            <person name="Wheeler D.A."/>
            <person name="Zhang Z."/>
            <person name="Bailey J.A."/>
            <person name="Eichler E.E."/>
            <person name="Tuzun E."/>
            <person name="Birney E."/>
            <person name="Mongin E."/>
            <person name="Ureta-Vidal A."/>
            <person name="Woodwark C."/>
            <person name="Zdobnov E."/>
            <person name="Bork P."/>
            <person name="Suyama M."/>
            <person name="Torrents D."/>
            <person name="Alexandersson M."/>
            <person name="Trask B.J."/>
            <person name="Young J.M."/>
            <person name="Huang H."/>
            <person name="Wang H."/>
            <person name="Xing H."/>
            <person name="Daniels S."/>
            <person name="Gietzen D."/>
            <person name="Schmidt J."/>
            <person name="Stevens K."/>
            <person name="Vitt U."/>
            <person name="Wingrove J."/>
            <person name="Camara F."/>
            <person name="Mar Alba M."/>
            <person name="Abril J.F."/>
            <person name="Guigo R."/>
            <person name="Smit A."/>
            <person name="Dubchak I."/>
            <person name="Rubin E.M."/>
            <person name="Couronne O."/>
            <person name="Poliakov A."/>
            <person name="Huebner N."/>
            <person name="Ganten D."/>
            <person name="Goesele C."/>
            <person name="Hummel O."/>
            <person name="Kreitler T."/>
            <person name="Lee Y.-A."/>
            <person name="Monti J."/>
            <person name="Schulz H."/>
            <person name="Zimdahl H."/>
            <person name="Himmelbauer H."/>
            <person name="Lehrach H."/>
            <person name="Jacob H.J."/>
            <person name="Bromberg S."/>
            <person name="Gullings-Handley J."/>
            <person name="Jensen-Seaman M.I."/>
            <person name="Kwitek A.E."/>
            <person name="Lazar J."/>
            <person name="Pasko D."/>
            <person name="Tonellato P.J."/>
            <person name="Twigger S."/>
            <person name="Ponting C.P."/>
            <person name="Duarte J.M."/>
            <person name="Rice S."/>
            <person name="Goodstadt L."/>
            <person name="Beatson S.A."/>
            <person name="Emes R.D."/>
            <person name="Winter E.E."/>
            <person name="Webber C."/>
            <person name="Brandt P."/>
            <person name="Nyakatura G."/>
            <person name="Adetobi M."/>
            <person name="Chiaromonte F."/>
            <person name="Elnitski L."/>
            <person name="Eswara P."/>
            <person name="Hardison R.C."/>
            <person name="Hou M."/>
            <person name="Kolbe D."/>
            <person name="Makova K."/>
            <person name="Miller W."/>
            <person name="Nekrutenko A."/>
            <person name="Riemer C."/>
            <person name="Schwartz S."/>
            <person name="Taylor J."/>
            <person name="Yang S."/>
            <person name="Zhang Y."/>
            <person name="Lindpaintner K."/>
            <person name="Andrews T.D."/>
            <person name="Caccamo M."/>
            <person name="Clamp M."/>
            <person name="Clarke L."/>
            <person name="Curwen V."/>
            <person name="Durbin R.M."/>
            <person name="Eyras E."/>
            <person name="Searle S.M."/>
            <person name="Cooper G.M."/>
            <person name="Batzoglou S."/>
            <person name="Brudno M."/>
            <person name="Sidow A."/>
            <person name="Stone E.A."/>
            <person name="Payseur B.A."/>
            <person name="Bourque G."/>
            <person name="Lopez-Otin C."/>
            <person name="Puente X.S."/>
            <person name="Chakrabarti K."/>
            <person name="Chatterji S."/>
            <person name="Dewey C."/>
            <person name="Pachter L."/>
            <person name="Bray N."/>
            <person name="Yap V.B."/>
            <person name="Caspi A."/>
            <person name="Tesler G."/>
            <person name="Pevzner P.A."/>
            <person name="Haussler D."/>
            <person name="Roskin K.M."/>
            <person name="Baertsch R."/>
            <person name="Clawson H."/>
            <person name="Furey T.S."/>
            <person name="Hinrichs A.S."/>
            <person name="Karolchik D."/>
            <person name="Kent W.J."/>
            <person name="Rosenbloom K.R."/>
            <person name="Trumbower H."/>
            <person name="Weirauch M."/>
            <person name="Cooper D.N."/>
            <person name="Stenson P.D."/>
            <person name="Ma B."/>
            <person name="Brent M."/>
            <person name="Arumugam M."/>
            <person name="Shteynberg D."/>
            <person name="Copley R.R."/>
            <person name="Taylor M.S."/>
            <person name="Riethman H."/>
            <person name="Mudunuri U."/>
            <person name="Peterson J."/>
            <person name="Guyer M."/>
            <person name="Felsenfeld A."/>
            <person name="Old S."/>
            <person name="Mockrin S."/>
            <person name="Collins F.S."/>
        </authorList>
    </citation>
    <scope>NUCLEOTIDE SEQUENCE [LARGE SCALE GENOMIC DNA]</scope>
    <source>
        <strain>Brown Norway</strain>
    </source>
</reference>
<reference key="2">
    <citation type="journal article" date="2004" name="Genome Res.">
        <title>The status, quality, and expansion of the NIH full-length cDNA project: the Mammalian Gene Collection (MGC).</title>
        <authorList>
            <consortium name="The MGC Project Team"/>
        </authorList>
    </citation>
    <scope>NUCLEOTIDE SEQUENCE [LARGE SCALE MRNA] (ISOFORM 2)</scope>
    <source>
        <tissue>Testis</tissue>
    </source>
</reference>
<reference key="3">
    <citation type="journal article" date="2001" name="J. Biol. Chem.">
        <title>Identification and characterization of a new mammalian glutaredoxin (thioltransferase), Grx2.</title>
        <authorList>
            <person name="Gladyshev V.N."/>
            <person name="Liu A."/>
            <person name="Novoselov S.V."/>
            <person name="Krysan K."/>
            <person name="Sun Q.-A."/>
            <person name="Kryukov V.M."/>
            <person name="Kryukov G.V."/>
            <person name="Lou M.F."/>
        </authorList>
    </citation>
    <scope>ALTERNATIVE SPLICING (ISOFORMS 1 AND 2)</scope>
</reference>
<sequence length="157" mass="17275">MSWYRAASVGRRLVASGRILAGRRGAAGAAGSGMGNSTSSFWGKSATTPVNQIQETISNNCVVIFSKSSCSYCSMAKKIFHDMNVNYKVVELDMVEYGSQFQEALYKMTGERTVPRIFVNGIFIGGAADTHRLHKEGKLLPLVHQCYLNKSKRKDVE</sequence>
<accession>Q6AXW1</accession>
<evidence type="ECO:0000250" key="1"/>
<evidence type="ECO:0000255" key="2"/>
<evidence type="ECO:0000255" key="3">
    <source>
        <dbReference type="PROSITE-ProRule" id="PRU00686"/>
    </source>
</evidence>
<evidence type="ECO:0000303" key="4">
    <source>
    </source>
</evidence>
<evidence type="ECO:0000305" key="5"/>
<organism>
    <name type="scientific">Rattus norvegicus</name>
    <name type="common">Rat</name>
    <dbReference type="NCBI Taxonomy" id="10116"/>
    <lineage>
        <taxon>Eukaryota</taxon>
        <taxon>Metazoa</taxon>
        <taxon>Chordata</taxon>
        <taxon>Craniata</taxon>
        <taxon>Vertebrata</taxon>
        <taxon>Euteleostomi</taxon>
        <taxon>Mammalia</taxon>
        <taxon>Eutheria</taxon>
        <taxon>Euarchontoglires</taxon>
        <taxon>Glires</taxon>
        <taxon>Rodentia</taxon>
        <taxon>Myomorpha</taxon>
        <taxon>Muroidea</taxon>
        <taxon>Muridae</taxon>
        <taxon>Murinae</taxon>
        <taxon>Rattus</taxon>
    </lineage>
</organism>
<dbReference type="EMBL" id="AABR03084863">
    <property type="status" value="NOT_ANNOTATED_CDS"/>
    <property type="molecule type" value="mRNA"/>
</dbReference>
<dbReference type="EMBL" id="BC079292">
    <property type="protein sequence ID" value="AAH79292.1"/>
    <property type="molecule type" value="mRNA"/>
</dbReference>
<dbReference type="RefSeq" id="NP_001013052.1">
    <property type="nucleotide sequence ID" value="NM_001013034.1"/>
</dbReference>
<dbReference type="RefSeq" id="NP_001381099.1">
    <molecule id="Q6AXW1-1"/>
    <property type="nucleotide sequence ID" value="NM_001394170.1"/>
</dbReference>
<dbReference type="RefSeq" id="NP_001381100.1">
    <molecule id="Q6AXW1-2"/>
    <property type="nucleotide sequence ID" value="NM_001394171.1"/>
</dbReference>
<dbReference type="RefSeq" id="NP_001381101.1">
    <molecule id="Q6AXW1-2"/>
    <property type="nucleotide sequence ID" value="NM_001394172.1"/>
</dbReference>
<dbReference type="RefSeq" id="XP_006250017.1">
    <molecule id="Q6AXW1-1"/>
    <property type="nucleotide sequence ID" value="XM_006249955.4"/>
</dbReference>
<dbReference type="RefSeq" id="XP_006250019.1">
    <property type="nucleotide sequence ID" value="XM_006249957.3"/>
</dbReference>
<dbReference type="RefSeq" id="XP_008767748.1">
    <molecule id="Q6AXW1-2"/>
    <property type="nucleotide sequence ID" value="XM_008769526.4"/>
</dbReference>
<dbReference type="RefSeq" id="XP_038946157.1">
    <molecule id="Q6AXW1-2"/>
    <property type="nucleotide sequence ID" value="XM_039090229.2"/>
</dbReference>
<dbReference type="RefSeq" id="XP_038946159.1">
    <molecule id="Q6AXW1-2"/>
    <property type="nucleotide sequence ID" value="XM_039090231.2"/>
</dbReference>
<dbReference type="RefSeq" id="XP_063128023.1">
    <molecule id="Q6AXW1-1"/>
    <property type="nucleotide sequence ID" value="XM_063271953.1"/>
</dbReference>
<dbReference type="RefSeq" id="XP_063128024.1">
    <molecule id="Q6AXW1-2"/>
    <property type="nucleotide sequence ID" value="XM_063271954.1"/>
</dbReference>
<dbReference type="SMR" id="Q6AXW1"/>
<dbReference type="FunCoup" id="Q6AXW1">
    <property type="interactions" value="288"/>
</dbReference>
<dbReference type="STRING" id="10116.ENSRNOP00000056811"/>
<dbReference type="PhosphoSitePlus" id="Q6AXW1"/>
<dbReference type="jPOST" id="Q6AXW1"/>
<dbReference type="PaxDb" id="10116-ENSRNOP00000056811"/>
<dbReference type="Ensembl" id="ENSRNOT00000060062.5">
    <molecule id="Q6AXW1-1"/>
    <property type="protein sequence ID" value="ENSRNOP00000056811.2"/>
    <property type="gene ID" value="ENSRNOG00000003385.8"/>
</dbReference>
<dbReference type="Ensembl" id="ENSRNOT00000106322.1">
    <molecule id="Q6AXW1-2"/>
    <property type="protein sequence ID" value="ENSRNOP00000096477.1"/>
    <property type="gene ID" value="ENSRNOG00000003385.8"/>
</dbReference>
<dbReference type="GeneID" id="114022"/>
<dbReference type="UCSC" id="RGD:1307950">
    <molecule id="Q6AXW1-1"/>
    <property type="organism name" value="rat"/>
</dbReference>
<dbReference type="AGR" id="RGD:1307950"/>
<dbReference type="CTD" id="51022"/>
<dbReference type="RGD" id="1307950">
    <property type="gene designation" value="Glrx2"/>
</dbReference>
<dbReference type="eggNOG" id="KOG1752">
    <property type="taxonomic scope" value="Eukaryota"/>
</dbReference>
<dbReference type="GeneTree" id="ENSGT00940000162420"/>
<dbReference type="HOGENOM" id="CLU_026126_7_0_1"/>
<dbReference type="InParanoid" id="Q6AXW1"/>
<dbReference type="OMA" id="DSTHAQF"/>
<dbReference type="OrthoDB" id="418495at2759"/>
<dbReference type="PRO" id="PR:Q6AXW1"/>
<dbReference type="Proteomes" id="UP000002494">
    <property type="component" value="Chromosome 13"/>
</dbReference>
<dbReference type="Bgee" id="ENSRNOG00000003385">
    <property type="expression patterns" value="Expressed in frontal cortex and 20 other cell types or tissues"/>
</dbReference>
<dbReference type="GO" id="GO:0030425">
    <property type="term" value="C:dendrite"/>
    <property type="evidence" value="ECO:0000314"/>
    <property type="project" value="RGD"/>
</dbReference>
<dbReference type="GO" id="GO:0005759">
    <property type="term" value="C:mitochondrial matrix"/>
    <property type="evidence" value="ECO:0000314"/>
    <property type="project" value="RGD"/>
</dbReference>
<dbReference type="GO" id="GO:0005739">
    <property type="term" value="C:mitochondrion"/>
    <property type="evidence" value="ECO:0000266"/>
    <property type="project" value="RGD"/>
</dbReference>
<dbReference type="GO" id="GO:0043025">
    <property type="term" value="C:neuronal cell body"/>
    <property type="evidence" value="ECO:0000314"/>
    <property type="project" value="RGD"/>
</dbReference>
<dbReference type="GO" id="GO:0005634">
    <property type="term" value="C:nucleus"/>
    <property type="evidence" value="ECO:0000266"/>
    <property type="project" value="RGD"/>
</dbReference>
<dbReference type="GO" id="GO:0051537">
    <property type="term" value="F:2 iron, 2 sulfur cluster binding"/>
    <property type="evidence" value="ECO:0007669"/>
    <property type="project" value="UniProtKB-KW"/>
</dbReference>
<dbReference type="GO" id="GO:0046872">
    <property type="term" value="F:metal ion binding"/>
    <property type="evidence" value="ECO:0007669"/>
    <property type="project" value="UniProtKB-KW"/>
</dbReference>
<dbReference type="GO" id="GO:0015035">
    <property type="term" value="F:protein-disulfide reductase activity"/>
    <property type="evidence" value="ECO:0000266"/>
    <property type="project" value="RGD"/>
</dbReference>
<dbReference type="GO" id="GO:0071451">
    <property type="term" value="P:cellular response to superoxide"/>
    <property type="evidence" value="ECO:0000270"/>
    <property type="project" value="RGD"/>
</dbReference>
<dbReference type="CDD" id="cd03419">
    <property type="entry name" value="GRX_GRXh_1_2_like"/>
    <property type="match status" value="1"/>
</dbReference>
<dbReference type="FunFam" id="3.40.30.10:FF:000026">
    <property type="entry name" value="Glutaredoxin 2"/>
    <property type="match status" value="1"/>
</dbReference>
<dbReference type="Gene3D" id="3.40.30.10">
    <property type="entry name" value="Glutaredoxin"/>
    <property type="match status" value="1"/>
</dbReference>
<dbReference type="InterPro" id="IPR002109">
    <property type="entry name" value="Glutaredoxin"/>
</dbReference>
<dbReference type="InterPro" id="IPR011899">
    <property type="entry name" value="Glutaredoxin_euk/vir"/>
</dbReference>
<dbReference type="InterPro" id="IPR014025">
    <property type="entry name" value="Glutaredoxin_subgr"/>
</dbReference>
<dbReference type="InterPro" id="IPR036249">
    <property type="entry name" value="Thioredoxin-like_sf"/>
</dbReference>
<dbReference type="NCBIfam" id="TIGR02180">
    <property type="entry name" value="GRX_euk"/>
    <property type="match status" value="1"/>
</dbReference>
<dbReference type="PANTHER" id="PTHR46679">
    <property type="match status" value="1"/>
</dbReference>
<dbReference type="PANTHER" id="PTHR46679:SF1">
    <property type="entry name" value="GLUTAREDOXIN-2, MITOCHONDRIAL"/>
    <property type="match status" value="1"/>
</dbReference>
<dbReference type="Pfam" id="PF00462">
    <property type="entry name" value="Glutaredoxin"/>
    <property type="match status" value="1"/>
</dbReference>
<dbReference type="PRINTS" id="PR00160">
    <property type="entry name" value="GLUTAREDOXIN"/>
</dbReference>
<dbReference type="SUPFAM" id="SSF52833">
    <property type="entry name" value="Thioredoxin-like"/>
    <property type="match status" value="1"/>
</dbReference>
<dbReference type="PROSITE" id="PS51354">
    <property type="entry name" value="GLUTAREDOXIN_2"/>
    <property type="match status" value="1"/>
</dbReference>
<comment type="function">
    <text evidence="1">Glutathione-dependent oxidoreductase that facilitates the maintenance of mitochondrial redox homeostasis upon induction of apoptosis by oxidative stress. Involved in response to hydrogen peroxide and regulation of apoptosis caused by oxidative stress. Acts as a very efficient catalyst of monothiol reactions because of its high affinity for protein glutathione-mixed disulfides. Can receive electrons not only from glutathione (GSH), but also from thioredoxin reductase supporting both monothiol and dithiol reactions. Efficiently catalyzes both glutathionylation and deglutathionylation of mitochondrial complex I, which in turn regulates the superoxide production by the complex. Overexpression decreases the susceptibility to apoptosis and prevents loss of cardiolipin and cytochrome c release (By similarity).</text>
</comment>
<comment type="activity regulation">
    <text evidence="1">The 2Fe-2S present in the homodimer leads to inactivation of the enzyme. The 2Fe-2S may serve as a redox sensor: the presence of one-electron oxidants or reductants leading to the loss of the 2Fe-2S cluster, subsequent monomerization and activation of the enzyme (By similarity).</text>
</comment>
<comment type="subunit">
    <text evidence="1">Monomer; active form. Homodimer; inactive form. The homodimer is probably linked by 1 2Fe-2S cluster (By similarity).</text>
</comment>
<comment type="subcellular location">
    <molecule>Isoform 1</molecule>
    <subcellularLocation>
        <location evidence="1">Mitochondrion</location>
    </subcellularLocation>
</comment>
<comment type="subcellular location">
    <molecule>Isoform 2</molecule>
    <subcellularLocation>
        <location evidence="1">Nucleus</location>
    </subcellularLocation>
</comment>
<comment type="alternative products">
    <event type="alternative splicing"/>
    <isoform>
        <id>Q6AXW1-1</id>
        <name>1</name>
        <sequence type="displayed"/>
    </isoform>
    <isoform>
        <id>Q6AXW1-2</id>
        <name>2</name>
        <sequence type="described" ref="VSP_015223"/>
    </isoform>
</comment>
<comment type="similarity">
    <text evidence="5">Belongs to the glutaredoxin family.</text>
</comment>
<gene>
    <name type="primary">Glrx2</name>
    <name type="synonym">Grx2</name>
</gene>
<name>GLRX2_RAT</name>
<protein>
    <recommendedName>
        <fullName>Glutaredoxin-2, mitochondrial</fullName>
    </recommendedName>
</protein>
<proteinExistence type="evidence at transcript level"/>
<feature type="transit peptide" description="Mitochondrion" evidence="2">
    <location>
        <begin position="1"/>
        <end position="19"/>
    </location>
</feature>
<feature type="chain" id="PRO_0000011631" description="Glutaredoxin-2, mitochondrial">
    <location>
        <begin position="20"/>
        <end position="157"/>
    </location>
</feature>
<feature type="domain" description="Glutaredoxin" evidence="3">
    <location>
        <begin position="50"/>
        <end position="150"/>
    </location>
</feature>
<feature type="binding site" description="in inactive form" evidence="1">
    <location>
        <position position="61"/>
    </location>
    <ligand>
        <name>[2Fe-2S] cluster</name>
        <dbReference type="ChEBI" id="CHEBI:190135"/>
        <note>ligand shared between dimeric partners</note>
    </ligand>
</feature>
<feature type="binding site" evidence="1">
    <location>
        <position position="67"/>
    </location>
    <ligand>
        <name>glutathione</name>
        <dbReference type="ChEBI" id="CHEBI:57925"/>
    </ligand>
</feature>
<feature type="binding site" evidence="1">
    <location>
        <position position="102"/>
    </location>
    <ligand>
        <name>glutathione</name>
        <dbReference type="ChEBI" id="CHEBI:57925"/>
    </ligand>
</feature>
<feature type="binding site" evidence="1">
    <location>
        <position position="114"/>
    </location>
    <ligand>
        <name>glutathione</name>
        <dbReference type="ChEBI" id="CHEBI:57925"/>
    </ligand>
</feature>
<feature type="binding site" description="in inactive form" evidence="1">
    <location>
        <position position="146"/>
    </location>
    <ligand>
        <name>[2Fe-2S] cluster</name>
        <dbReference type="ChEBI" id="CHEBI:190135"/>
        <note>ligand shared between dimeric partners</note>
    </ligand>
</feature>
<feature type="modified residue" description="S-glutathionyl cysteine; alternate" evidence="1">
    <location>
        <position position="70"/>
    </location>
</feature>
<feature type="disulfide bond" description="Redox-active; alternate" evidence="1">
    <location>
        <begin position="70"/>
        <end position="73"/>
    </location>
</feature>
<feature type="splice variant" id="VSP_015223" description="In isoform 2." evidence="4">
    <location>
        <begin position="1"/>
        <end position="33"/>
    </location>
</feature>
<keyword id="KW-0001">2Fe-2S</keyword>
<keyword id="KW-0025">Alternative splicing</keyword>
<keyword id="KW-1015">Disulfide bond</keyword>
<keyword id="KW-0249">Electron transport</keyword>
<keyword id="KW-0318">Glutathionylation</keyword>
<keyword id="KW-0408">Iron</keyword>
<keyword id="KW-0411">Iron-sulfur</keyword>
<keyword id="KW-0479">Metal-binding</keyword>
<keyword id="KW-0496">Mitochondrion</keyword>
<keyword id="KW-0539">Nucleus</keyword>
<keyword id="KW-0676">Redox-active center</keyword>
<keyword id="KW-1185">Reference proteome</keyword>
<keyword id="KW-0809">Transit peptide</keyword>
<keyword id="KW-0813">Transport</keyword>